<name>C1D_BOVIN</name>
<reference key="1">
    <citation type="submission" date="2005-10" db="EMBL/GenBank/DDBJ databases">
        <authorList>
            <consortium name="NIH - Mammalian Gene Collection (MGC) project"/>
        </authorList>
    </citation>
    <scope>NUCLEOTIDE SEQUENCE [LARGE SCALE MRNA]</scope>
    <source>
        <strain>Crossbred X Angus</strain>
        <tissue>Liver</tissue>
    </source>
</reference>
<keyword id="KW-0053">Apoptosis</keyword>
<keyword id="KW-0963">Cytoplasm</keyword>
<keyword id="KW-0238">DNA-binding</keyword>
<keyword id="KW-1017">Isopeptide bond</keyword>
<keyword id="KW-0539">Nucleus</keyword>
<keyword id="KW-0597">Phosphoprotein</keyword>
<keyword id="KW-1185">Reference proteome</keyword>
<keyword id="KW-0678">Repressor</keyword>
<keyword id="KW-0694">RNA-binding</keyword>
<keyword id="KW-0698">rRNA processing</keyword>
<keyword id="KW-0804">Transcription</keyword>
<keyword id="KW-0805">Transcription regulation</keyword>
<keyword id="KW-0832">Ubl conjugation</keyword>
<accession>Q32PE4</accession>
<comment type="function">
    <text evidence="2 3">Plays a role in the recruitment of the RNA exosome complex to pre-rRNA to mediate the 3'-5' end processing of the 5.8S rRNA; this function may include MPHOSPH6. Can activate PRKDC not only in the presence of linear DNA but also in the presence of supercoiled DNA. Can induce apoptosis in a p53/TP53 dependent manner. May regulate the TRAX/TSN complex formation. Potentiates transcriptional repression by NR1D1 and THRB (By similarity).</text>
</comment>
<comment type="subunit">
    <text evidence="2 3">Monomer and homodimer. Interacts with NR1D1, THRA, THRB, NCOR1 and NCOR2. Associates with the RNA exosome complex (By similarity). Interacts with EXOSC10; the interaction probably mediates the association with the nuclear form of the RNA exosome. The homodimeric form interacts with TSNAX following gamma-radiation. Interacts with RAC3.</text>
</comment>
<comment type="subcellular location">
    <subcellularLocation>
        <location evidence="3">Nucleus</location>
    </subcellularLocation>
    <subcellularLocation>
        <location evidence="3">Cytoplasm</location>
    </subcellularLocation>
    <subcellularLocation>
        <location evidence="3">Nucleus</location>
        <location evidence="3">Nucleolus</location>
    </subcellularLocation>
    <text evidence="3">EXOSC10 is required for nucleolar localization. Colocalizes with TSNAX in the nucleus.</text>
</comment>
<comment type="PTM">
    <text evidence="3">Phosphorylated by PRKDC.</text>
</comment>
<comment type="similarity">
    <text evidence="4">Belongs to the C1D family.</text>
</comment>
<feature type="chain" id="PRO_0000316298" description="Nuclear nucleic acid-binding protein C1D">
    <location>
        <begin position="1"/>
        <end position="141"/>
    </location>
</feature>
<feature type="region of interest" description="Required for transcriptional repression" evidence="1">
    <location>
        <begin position="1"/>
        <end position="100"/>
    </location>
</feature>
<feature type="region of interest" description="Interaction with NR1D1" evidence="1">
    <location>
        <begin position="50"/>
        <end position="100"/>
    </location>
</feature>
<feature type="region of interest" description="Interaction with NCOR1 and NCOR2" evidence="1">
    <location>
        <begin position="100"/>
        <end position="141"/>
    </location>
</feature>
<feature type="cross-link" description="Glycyl lysine isopeptide (Lys-Gly) (interchain with G-Cter in SUMO2)" evidence="3">
    <location>
        <position position="119"/>
    </location>
</feature>
<feature type="cross-link" description="Glycyl lysine isopeptide (Lys-Gly) (interchain with G-Cter in SUMO2)" evidence="3">
    <location>
        <position position="126"/>
    </location>
</feature>
<feature type="cross-link" description="Glycyl lysine isopeptide (Lys-Gly) (interchain with G-Cter in SUMO2)" evidence="3">
    <location>
        <position position="132"/>
    </location>
</feature>
<evidence type="ECO:0000250" key="1"/>
<evidence type="ECO:0000250" key="2">
    <source>
        <dbReference type="UniProtKB" id="O35473"/>
    </source>
</evidence>
<evidence type="ECO:0000250" key="3">
    <source>
        <dbReference type="UniProtKB" id="Q13901"/>
    </source>
</evidence>
<evidence type="ECO:0000305" key="4"/>
<organism>
    <name type="scientific">Bos taurus</name>
    <name type="common">Bovine</name>
    <dbReference type="NCBI Taxonomy" id="9913"/>
    <lineage>
        <taxon>Eukaryota</taxon>
        <taxon>Metazoa</taxon>
        <taxon>Chordata</taxon>
        <taxon>Craniata</taxon>
        <taxon>Vertebrata</taxon>
        <taxon>Euteleostomi</taxon>
        <taxon>Mammalia</taxon>
        <taxon>Eutheria</taxon>
        <taxon>Laurasiatheria</taxon>
        <taxon>Artiodactyla</taxon>
        <taxon>Ruminantia</taxon>
        <taxon>Pecora</taxon>
        <taxon>Bovidae</taxon>
        <taxon>Bovinae</taxon>
        <taxon>Bos</taxon>
    </lineage>
</organism>
<dbReference type="EMBL" id="BC108147">
    <property type="protein sequence ID" value="AAI08148.1"/>
    <property type="molecule type" value="mRNA"/>
</dbReference>
<dbReference type="RefSeq" id="NP_001032525.1">
    <property type="nucleotide sequence ID" value="NM_001037448.2"/>
</dbReference>
<dbReference type="RefSeq" id="XP_005212901.1">
    <property type="nucleotide sequence ID" value="XM_005212844.5"/>
</dbReference>
<dbReference type="RefSeq" id="XP_010808419.1">
    <property type="nucleotide sequence ID" value="XM_010810117.2"/>
</dbReference>
<dbReference type="RefSeq" id="XP_059747080.1">
    <property type="nucleotide sequence ID" value="XM_059891097.1"/>
</dbReference>
<dbReference type="RefSeq" id="XP_059747081.1">
    <property type="nucleotide sequence ID" value="XM_059891098.1"/>
</dbReference>
<dbReference type="RefSeq" id="XP_059747082.1">
    <property type="nucleotide sequence ID" value="XM_059891099.1"/>
</dbReference>
<dbReference type="SMR" id="Q32PE4"/>
<dbReference type="FunCoup" id="Q32PE4">
    <property type="interactions" value="2104"/>
</dbReference>
<dbReference type="STRING" id="9913.ENSBTAP00000061317"/>
<dbReference type="PaxDb" id="9913-ENSBTAP00000006000"/>
<dbReference type="Ensembl" id="ENSBTAT00000086807.2">
    <property type="protein sequence ID" value="ENSBTAP00000061317.1"/>
    <property type="gene ID" value="ENSBTAG00000049002.2"/>
</dbReference>
<dbReference type="GeneID" id="506667"/>
<dbReference type="KEGG" id="bta:506667"/>
<dbReference type="CTD" id="10438"/>
<dbReference type="VEuPathDB" id="HostDB:ENSBTAG00000049002"/>
<dbReference type="VGNC" id="VGNC:26614">
    <property type="gene designation" value="C1D"/>
</dbReference>
<dbReference type="eggNOG" id="KOG4835">
    <property type="taxonomic scope" value="Eukaryota"/>
</dbReference>
<dbReference type="GeneTree" id="ENSGT00390000015405"/>
<dbReference type="HOGENOM" id="CLU_064339_4_1_1"/>
<dbReference type="InParanoid" id="Q32PE4"/>
<dbReference type="OMA" id="KLMSMPR"/>
<dbReference type="OrthoDB" id="1421013at2759"/>
<dbReference type="TreeFam" id="TF314651"/>
<dbReference type="Reactome" id="R-BTA-6791226">
    <property type="pathway name" value="Major pathway of rRNA processing in the nucleolus and cytosol"/>
</dbReference>
<dbReference type="Proteomes" id="UP000009136">
    <property type="component" value="Chromosome 11"/>
</dbReference>
<dbReference type="Bgee" id="ENSBTAG00000049002">
    <property type="expression patterns" value="Expressed in occipital lobe and 106 other cell types or tissues"/>
</dbReference>
<dbReference type="GO" id="GO:0005737">
    <property type="term" value="C:cytoplasm"/>
    <property type="evidence" value="ECO:0007669"/>
    <property type="project" value="UniProtKB-SubCell"/>
</dbReference>
<dbReference type="GO" id="GO:0000178">
    <property type="term" value="C:exosome (RNase complex)"/>
    <property type="evidence" value="ECO:0000318"/>
    <property type="project" value="GO_Central"/>
</dbReference>
<dbReference type="GO" id="GO:0005730">
    <property type="term" value="C:nucleolus"/>
    <property type="evidence" value="ECO:0000318"/>
    <property type="project" value="GO_Central"/>
</dbReference>
<dbReference type="GO" id="GO:0003677">
    <property type="term" value="F:DNA binding"/>
    <property type="evidence" value="ECO:0000318"/>
    <property type="project" value="GO_Central"/>
</dbReference>
<dbReference type="GO" id="GO:0003723">
    <property type="term" value="F:RNA binding"/>
    <property type="evidence" value="ECO:0000318"/>
    <property type="project" value="GO_Central"/>
</dbReference>
<dbReference type="GO" id="GO:0006915">
    <property type="term" value="P:apoptotic process"/>
    <property type="evidence" value="ECO:0007669"/>
    <property type="project" value="UniProtKB-KW"/>
</dbReference>
<dbReference type="GO" id="GO:0000460">
    <property type="term" value="P:maturation of 5.8S rRNA"/>
    <property type="evidence" value="ECO:0000318"/>
    <property type="project" value="GO_Central"/>
</dbReference>
<dbReference type="GO" id="GO:0010468">
    <property type="term" value="P:regulation of gene expression"/>
    <property type="evidence" value="ECO:0000318"/>
    <property type="project" value="GO_Central"/>
</dbReference>
<dbReference type="InterPro" id="IPR011082">
    <property type="entry name" value="Exosome-assoc_fac/DNA_repair"/>
</dbReference>
<dbReference type="InterPro" id="IPR007146">
    <property type="entry name" value="Sas10/Utp3/C1D"/>
</dbReference>
<dbReference type="PANTHER" id="PTHR15341:SF3">
    <property type="entry name" value="NUCLEAR NUCLEIC ACID-BINDING PROTEIN C1D"/>
    <property type="match status" value="1"/>
</dbReference>
<dbReference type="PANTHER" id="PTHR15341">
    <property type="entry name" value="SUN-COR STEROID HORMONE RECEPTOR CO-REPRESSOR"/>
    <property type="match status" value="1"/>
</dbReference>
<dbReference type="Pfam" id="PF04000">
    <property type="entry name" value="Sas10_Utp3"/>
    <property type="match status" value="1"/>
</dbReference>
<proteinExistence type="evidence at transcript level"/>
<protein>
    <recommendedName>
        <fullName>Nuclear nucleic acid-binding protein C1D</fullName>
    </recommendedName>
</protein>
<gene>
    <name type="primary">C1D</name>
</gene>
<sequence length="141" mass="16014">MAGEGINEDYPVEIHEYLSTFENSIGAVDEMLKTMMSVSRNELLQKLDPLEQAKVDLVSAYTLNSMFWVYLATQGVNPKEHPVKQELERIRVYMNRVKEITDKKKAGKLDRGAASRFVKNALWEPKPKNASKVANKGKSKN</sequence>